<feature type="chain" id="PRO_0000259590" description="Spindlin-2C">
    <location>
        <begin position="1"/>
        <end position="257"/>
    </location>
</feature>
<feature type="region of interest" description="Disordered" evidence="5">
    <location>
        <begin position="1"/>
        <end position="47"/>
    </location>
</feature>
<feature type="region of interest" description="Tudor-like domain 1" evidence="4">
    <location>
        <begin position="48"/>
        <end position="97"/>
    </location>
</feature>
<feature type="region of interest" description="Tudor-like domain 2" evidence="4">
    <location>
        <begin position="127"/>
        <end position="176"/>
    </location>
</feature>
<feature type="region of interest" description="Histone H3K4me3 and H3R8me2a binding" evidence="3">
    <location>
        <position position="136"/>
    </location>
</feature>
<feature type="region of interest" description="Tudor-like domain 3" evidence="4">
    <location>
        <begin position="208"/>
        <end position="253"/>
    </location>
</feature>
<feature type="region of interest" description="Histone H3K4me3 and H3R8me2a binding" evidence="3">
    <location>
        <begin position="244"/>
        <end position="246"/>
    </location>
</feature>
<feature type="compositionally biased region" description="Basic residues" evidence="5">
    <location>
        <begin position="27"/>
        <end position="43"/>
    </location>
</feature>
<feature type="site" description="Histone H3K4me3 and H3R8me2a binding" evidence="3">
    <location>
        <position position="167"/>
    </location>
</feature>
<feature type="site" description="Histone H3K4me3 and H3R8me2a binding" evidence="3">
    <location>
        <position position="174"/>
    </location>
</feature>
<feature type="site" description="Histone H3K4me3 and H3R8me2a binding" evidence="3">
    <location>
        <position position="178"/>
    </location>
</feature>
<organism>
    <name type="scientific">Mus musculus</name>
    <name type="common">Mouse</name>
    <dbReference type="NCBI Taxonomy" id="10090"/>
    <lineage>
        <taxon>Eukaryota</taxon>
        <taxon>Metazoa</taxon>
        <taxon>Chordata</taxon>
        <taxon>Craniata</taxon>
        <taxon>Vertebrata</taxon>
        <taxon>Euteleostomi</taxon>
        <taxon>Mammalia</taxon>
        <taxon>Eutheria</taxon>
        <taxon>Euarchontoglires</taxon>
        <taxon>Glires</taxon>
        <taxon>Rodentia</taxon>
        <taxon>Myomorpha</taxon>
        <taxon>Muroidea</taxon>
        <taxon>Muridae</taxon>
        <taxon>Murinae</taxon>
        <taxon>Mus</taxon>
        <taxon>Mus</taxon>
    </lineage>
</organism>
<name>SPI2C_MOUSE</name>
<reference key="1">
    <citation type="journal article" date="2004" name="Genome Res.">
        <title>The status, quality, and expansion of the NIH full-length cDNA project: the Mammalian Gene Collection (MGC).</title>
        <authorList>
            <consortium name="The MGC Project Team"/>
        </authorList>
    </citation>
    <scope>NUCLEOTIDE SEQUENCE [LARGE SCALE MRNA]</scope>
    <source>
        <strain>C57BL/6J</strain>
        <tissue>Brain</tissue>
    </source>
</reference>
<gene>
    <name type="primary">Spin2c</name>
    <name type="synonym">Spin2</name>
</gene>
<proteinExistence type="evidence at transcript level"/>
<protein>
    <recommendedName>
        <fullName>Spindlin-2C</fullName>
    </recommendedName>
    <alternativeName>
        <fullName>Spindlin-like protein 2C</fullName>
        <shortName>SPIN-2</shortName>
        <shortName>SPIN-2C</shortName>
    </alternativeName>
</protein>
<dbReference type="EMBL" id="BC068162">
    <property type="protein sequence ID" value="AAH68162.1"/>
    <property type="molecule type" value="mRNA"/>
</dbReference>
<dbReference type="CCDS" id="CCDS30485.1"/>
<dbReference type="RefSeq" id="NP_001005370.1">
    <property type="nucleotide sequence ID" value="NM_001005370.2"/>
</dbReference>
<dbReference type="RefSeq" id="NP_001405303.1">
    <property type="nucleotide sequence ID" value="NM_001418374.1"/>
</dbReference>
<dbReference type="RefSeq" id="NP_001405304.1">
    <property type="nucleotide sequence ID" value="NM_001418375.1"/>
</dbReference>
<dbReference type="RefSeq" id="XP_006528931.1">
    <property type="nucleotide sequence ID" value="XM_006528868.3"/>
</dbReference>
<dbReference type="RefSeq" id="XP_006528932.1">
    <property type="nucleotide sequence ID" value="XM_006528869.3"/>
</dbReference>
<dbReference type="SMR" id="Q6NVE3"/>
<dbReference type="BioGRID" id="234980">
    <property type="interactions" value="1"/>
</dbReference>
<dbReference type="FunCoup" id="Q6NVE3">
    <property type="interactions" value="230"/>
</dbReference>
<dbReference type="STRING" id="10090.ENSMUSP00000059499"/>
<dbReference type="iPTMnet" id="Q6NVE3"/>
<dbReference type="PhosphoSitePlus" id="Q6NVE3"/>
<dbReference type="PaxDb" id="10090-ENSMUSP00000059499"/>
<dbReference type="ProteomicsDB" id="257320"/>
<dbReference type="DNASU" id="278240"/>
<dbReference type="Ensembl" id="ENSMUST00000049999.9">
    <property type="protein sequence ID" value="ENSMUSP00000059499.9"/>
    <property type="gene ID" value="ENSMUSG00000046550.9"/>
</dbReference>
<dbReference type="GeneID" id="278240"/>
<dbReference type="KEGG" id="mmu:278240"/>
<dbReference type="UCSC" id="uc009urb.1">
    <property type="organism name" value="mouse"/>
</dbReference>
<dbReference type="AGR" id="MGI:3605548"/>
<dbReference type="CTD" id="278240"/>
<dbReference type="MGI" id="MGI:3605548">
    <property type="gene designation" value="Spin2c"/>
</dbReference>
<dbReference type="VEuPathDB" id="HostDB:ENSMUSG00000046550"/>
<dbReference type="eggNOG" id="ENOG502QRYD">
    <property type="taxonomic scope" value="Eukaryota"/>
</dbReference>
<dbReference type="GeneTree" id="ENSGT00950000182925"/>
<dbReference type="HOGENOM" id="CLU_068595_0_0_1"/>
<dbReference type="InParanoid" id="Q6NVE3"/>
<dbReference type="OMA" id="NCQKKQR"/>
<dbReference type="OrthoDB" id="9944558at2759"/>
<dbReference type="PhylomeDB" id="Q6NVE3"/>
<dbReference type="TreeFam" id="TF332665"/>
<dbReference type="BioGRID-ORCS" id="278240">
    <property type="hits" value="2 hits in 76 CRISPR screens"/>
</dbReference>
<dbReference type="PRO" id="PR:Q6NVE3"/>
<dbReference type="Proteomes" id="UP000000589">
    <property type="component" value="Chromosome X"/>
</dbReference>
<dbReference type="RNAct" id="Q6NVE3">
    <property type="molecule type" value="protein"/>
</dbReference>
<dbReference type="Bgee" id="ENSMUSG00000046550">
    <property type="expression patterns" value="Expressed in primitive streak and 191 other cell types or tissues"/>
</dbReference>
<dbReference type="ExpressionAtlas" id="Q6NVE3">
    <property type="expression patterns" value="baseline and differential"/>
</dbReference>
<dbReference type="GO" id="GO:0005634">
    <property type="term" value="C:nucleus"/>
    <property type="evidence" value="ECO:0007669"/>
    <property type="project" value="UniProtKB-SubCell"/>
</dbReference>
<dbReference type="GO" id="GO:0140002">
    <property type="term" value="F:histone H3K4me3 reader activity"/>
    <property type="evidence" value="ECO:0000250"/>
    <property type="project" value="UniProtKB"/>
</dbReference>
<dbReference type="GO" id="GO:0007276">
    <property type="term" value="P:gamete generation"/>
    <property type="evidence" value="ECO:0007669"/>
    <property type="project" value="InterPro"/>
</dbReference>
<dbReference type="FunFam" id="2.80.10.70:FF:000001">
    <property type="entry name" value="Spindlin 1"/>
    <property type="match status" value="1"/>
</dbReference>
<dbReference type="Gene3D" id="2.80.10.70">
    <property type="entry name" value="Spindlin/Ssty"/>
    <property type="match status" value="1"/>
</dbReference>
<dbReference type="InterPro" id="IPR003671">
    <property type="entry name" value="SPIN/Ssty"/>
</dbReference>
<dbReference type="InterPro" id="IPR042567">
    <property type="entry name" value="SPIN/Ssty_sf"/>
</dbReference>
<dbReference type="PANTHER" id="PTHR10405">
    <property type="entry name" value="SPINDLIN"/>
    <property type="match status" value="1"/>
</dbReference>
<dbReference type="Pfam" id="PF02513">
    <property type="entry name" value="Spin-Ssty"/>
    <property type="match status" value="3"/>
</dbReference>
<evidence type="ECO:0000250" key="1">
    <source>
        <dbReference type="UniProtKB" id="Q99865"/>
    </source>
</evidence>
<evidence type="ECO:0000250" key="2">
    <source>
        <dbReference type="UniProtKB" id="Q9BPZ2"/>
    </source>
</evidence>
<evidence type="ECO:0000250" key="3">
    <source>
        <dbReference type="UniProtKB" id="Q9Y657"/>
    </source>
</evidence>
<evidence type="ECO:0000255" key="4"/>
<evidence type="ECO:0000256" key="5">
    <source>
        <dbReference type="SAM" id="MobiDB-lite"/>
    </source>
</evidence>
<evidence type="ECO:0000305" key="6"/>
<keyword id="KW-0131">Cell cycle</keyword>
<keyword id="KW-0539">Nucleus</keyword>
<keyword id="KW-1185">Reference proteome</keyword>
<sequence length="257" mass="29207">MKTPHKKGAAKEQMGEGVGHHIGSTTIKKKKASQKRQRSRSSSRRSIVGCRISHGWKEGDEPITQWKGTVLDQVPINPSLYLVKYDGIDCVYGLELHRDERILKLKILPDKVSFSGVSDVRLANTIIGKAVEHMFEGEHGSKDEWRGMVLAQAPIMNAWFYITYERDPVLYMYQLLDDYKEGDLRIMPESSASPPADREPEGVVDGLIGKHVEYTKEDGSKRTGKVIHQVKAKPSVYFIKFDDDFHIYVYDLVKKNS</sequence>
<comment type="function">
    <text evidence="1">May be involved in the regulation of cell cycle progression. Exhibits H3K4me3-binding activity.</text>
</comment>
<comment type="subunit">
    <text evidence="1">Interacts with C11orf84/SPINDOC.</text>
</comment>
<comment type="subcellular location">
    <subcellularLocation>
        <location evidence="2">Nucleus</location>
    </subcellularLocation>
</comment>
<comment type="similarity">
    <text evidence="6">Belongs to the SPIN/STSY family.</text>
</comment>
<accession>Q6NVE3</accession>